<feature type="chain" id="PRO_0000367450" description="RNA polymerase sigma factor SigS">
    <location>
        <begin position="1"/>
        <end position="156"/>
    </location>
</feature>
<feature type="DNA-binding region" description="H-T-H motif" evidence="1">
    <location>
        <begin position="126"/>
        <end position="145"/>
    </location>
</feature>
<feature type="short sequence motif" description="Polymerase core binding">
    <location>
        <begin position="29"/>
        <end position="44"/>
    </location>
</feature>
<name>SIGS_STAA1</name>
<keyword id="KW-0238">DNA-binding</keyword>
<keyword id="KW-0731">Sigma factor</keyword>
<keyword id="KW-0804">Transcription</keyword>
<keyword id="KW-0805">Transcription regulation</keyword>
<protein>
    <recommendedName>
        <fullName>RNA polymerase sigma factor SigS</fullName>
    </recommendedName>
</protein>
<organism>
    <name type="scientific">Staphylococcus aureus (strain Mu3 / ATCC 700698)</name>
    <dbReference type="NCBI Taxonomy" id="418127"/>
    <lineage>
        <taxon>Bacteria</taxon>
        <taxon>Bacillati</taxon>
        <taxon>Bacillota</taxon>
        <taxon>Bacilli</taxon>
        <taxon>Bacillales</taxon>
        <taxon>Staphylococcaceae</taxon>
        <taxon>Staphylococcus</taxon>
    </lineage>
</organism>
<evidence type="ECO:0000250" key="1"/>
<evidence type="ECO:0000305" key="2"/>
<sequence length="156" mass="19161">MKFNDVYNKHHKIIHHLLKKYNISYNYDEYYQLLLIKMWQLSQIYKPSSKQSLSSFLFTRLNYYLIDLFRQQNQLKDVILCENNSPTLTEQPTYFNEHDLRLQDIFKLLNHRERLWLKLYLEGYKQFEIAEIMSLSLSTIKLIKMSVKRKCQHNFN</sequence>
<dbReference type="EMBL" id="AP009324">
    <property type="protein sequence ID" value="BAF78645.1"/>
    <property type="molecule type" value="Genomic_DNA"/>
</dbReference>
<dbReference type="RefSeq" id="WP_000671057.1">
    <property type="nucleotide sequence ID" value="NC_009782.1"/>
</dbReference>
<dbReference type="SMR" id="A7X3L7"/>
<dbReference type="KEGG" id="saw:SAHV_1762"/>
<dbReference type="HOGENOM" id="CLU_047691_20_2_9"/>
<dbReference type="GO" id="GO:0003677">
    <property type="term" value="F:DNA binding"/>
    <property type="evidence" value="ECO:0007669"/>
    <property type="project" value="UniProtKB-KW"/>
</dbReference>
<dbReference type="GO" id="GO:0016987">
    <property type="term" value="F:sigma factor activity"/>
    <property type="evidence" value="ECO:0007669"/>
    <property type="project" value="UniProtKB-KW"/>
</dbReference>
<dbReference type="GO" id="GO:0006352">
    <property type="term" value="P:DNA-templated transcription initiation"/>
    <property type="evidence" value="ECO:0007669"/>
    <property type="project" value="InterPro"/>
</dbReference>
<dbReference type="Gene3D" id="1.10.10.10">
    <property type="entry name" value="Winged helix-like DNA-binding domain superfamily/Winged helix DNA-binding domain"/>
    <property type="match status" value="1"/>
</dbReference>
<dbReference type="InterPro" id="IPR014284">
    <property type="entry name" value="RNA_pol_sigma-70_dom"/>
</dbReference>
<dbReference type="InterPro" id="IPR007627">
    <property type="entry name" value="RNA_pol_sigma70_r2"/>
</dbReference>
<dbReference type="InterPro" id="IPR013325">
    <property type="entry name" value="RNA_pol_sigma_r2"/>
</dbReference>
<dbReference type="InterPro" id="IPR016032">
    <property type="entry name" value="Sig_transdc_resp-reg_C-effctor"/>
</dbReference>
<dbReference type="InterPro" id="IPR036388">
    <property type="entry name" value="WH-like_DNA-bd_sf"/>
</dbReference>
<dbReference type="NCBIfam" id="TIGR02937">
    <property type="entry name" value="sigma70-ECF"/>
    <property type="match status" value="1"/>
</dbReference>
<dbReference type="Pfam" id="PF04542">
    <property type="entry name" value="Sigma70_r2"/>
    <property type="match status" value="1"/>
</dbReference>
<dbReference type="SUPFAM" id="SSF46894">
    <property type="entry name" value="C-terminal effector domain of the bipartite response regulators"/>
    <property type="match status" value="1"/>
</dbReference>
<dbReference type="SUPFAM" id="SSF88946">
    <property type="entry name" value="Sigma2 domain of RNA polymerase sigma factors"/>
    <property type="match status" value="1"/>
</dbReference>
<proteinExistence type="inferred from homology"/>
<reference key="1">
    <citation type="journal article" date="2008" name="Antimicrob. Agents Chemother.">
        <title>Mutated response regulator graR is responsible for phenotypic conversion of Staphylococcus aureus from heterogeneous vancomycin-intermediate resistance to vancomycin-intermediate resistance.</title>
        <authorList>
            <person name="Neoh H.-M."/>
            <person name="Cui L."/>
            <person name="Yuzawa H."/>
            <person name="Takeuchi F."/>
            <person name="Matsuo M."/>
            <person name="Hiramatsu K."/>
        </authorList>
    </citation>
    <scope>NUCLEOTIDE SEQUENCE [LARGE SCALE GENOMIC DNA]</scope>
    <source>
        <strain>Mu3 / ATCC 700698</strain>
    </source>
</reference>
<comment type="function">
    <text evidence="1">Sigma factors are initiation factors that promote the attachment of RNA polymerase to specific initiation sites and are then released. Sigma-S contributes to the protection against external stress, thus playing a role in cellular fitness and survival (By similarity).</text>
</comment>
<comment type="similarity">
    <text evidence="2">Belongs to the sigma-70 factor family.</text>
</comment>
<accession>A7X3L7</accession>
<gene>
    <name type="primary">sigS</name>
    <name type="ordered locus">SAHV_1762</name>
</gene>